<name>HIS1_CORJK</name>
<protein>
    <recommendedName>
        <fullName evidence="1">ATP phosphoribosyltransferase</fullName>
        <shortName evidence="1">ATP-PRT</shortName>
        <shortName evidence="1">ATP-PRTase</shortName>
        <ecNumber evidence="1">2.4.2.17</ecNumber>
    </recommendedName>
</protein>
<organism>
    <name type="scientific">Corynebacterium jeikeium (strain K411)</name>
    <dbReference type="NCBI Taxonomy" id="306537"/>
    <lineage>
        <taxon>Bacteria</taxon>
        <taxon>Bacillati</taxon>
        <taxon>Actinomycetota</taxon>
        <taxon>Actinomycetes</taxon>
        <taxon>Mycobacteriales</taxon>
        <taxon>Corynebacteriaceae</taxon>
        <taxon>Corynebacterium</taxon>
    </lineage>
</organism>
<keyword id="KW-0028">Amino-acid biosynthesis</keyword>
<keyword id="KW-0067">ATP-binding</keyword>
<keyword id="KW-0963">Cytoplasm</keyword>
<keyword id="KW-0328">Glycosyltransferase</keyword>
<keyword id="KW-0368">Histidine biosynthesis</keyword>
<keyword id="KW-0460">Magnesium</keyword>
<keyword id="KW-0479">Metal-binding</keyword>
<keyword id="KW-0547">Nucleotide-binding</keyword>
<keyword id="KW-1185">Reference proteome</keyword>
<keyword id="KW-0808">Transferase</keyword>
<gene>
    <name evidence="1" type="primary">hisG</name>
    <name type="ordered locus">jk0952</name>
</gene>
<accession>Q4JVP1</accession>
<reference key="1">
    <citation type="journal article" date="2005" name="J. Bacteriol.">
        <title>Complete genome sequence and analysis of the multiresistant nosocomial pathogen Corynebacterium jeikeium K411, a lipid-requiring bacterium of the human skin flora.</title>
        <authorList>
            <person name="Tauch A."/>
            <person name="Kaiser O."/>
            <person name="Hain T."/>
            <person name="Goesmann A."/>
            <person name="Weisshaar B."/>
            <person name="Albersmeier A."/>
            <person name="Bekel T."/>
            <person name="Bischoff N."/>
            <person name="Brune I."/>
            <person name="Chakraborty T."/>
            <person name="Kalinowski J."/>
            <person name="Meyer F."/>
            <person name="Rupp O."/>
            <person name="Schneiker S."/>
            <person name="Viehoever P."/>
            <person name="Puehler A."/>
        </authorList>
    </citation>
    <scope>NUCLEOTIDE SEQUENCE [LARGE SCALE GENOMIC DNA]</scope>
    <source>
        <strain>K411</strain>
    </source>
</reference>
<sequence length="281" mass="30167">MLRVAVPNKGSLSETATSILKEAGYATRGDSKSLTIADEDNGVEFYFLRPKDIAIYIASGHLDIGITGRDLAADTREEVDELLALGFGASTFRYAAPKDENWTVEQLAGKRIATSYPNLVRKDLANRGLEAQVIRLDGAVEISIRLGVADVIADVVSTGRTLRQQGLKPFGDPLCVSEAVIVGRKGAEVTAEQSVLIKRIQGILHAHNYVMLDYNVARENLDKVAAITPGLSAPTVSPLANDSWVAVRAMVPKTQANSLMDELSALGAEAILATDIRIARI</sequence>
<feature type="chain" id="PRO_1000004455" description="ATP phosphoribosyltransferase">
    <location>
        <begin position="1"/>
        <end position="281"/>
    </location>
</feature>
<proteinExistence type="inferred from homology"/>
<evidence type="ECO:0000255" key="1">
    <source>
        <dbReference type="HAMAP-Rule" id="MF_00079"/>
    </source>
</evidence>
<dbReference type="EC" id="2.4.2.17" evidence="1"/>
<dbReference type="EMBL" id="CR931997">
    <property type="protein sequence ID" value="CAI37116.1"/>
    <property type="molecule type" value="Genomic_DNA"/>
</dbReference>
<dbReference type="RefSeq" id="WP_005294697.1">
    <property type="nucleotide sequence ID" value="NC_007164.1"/>
</dbReference>
<dbReference type="SMR" id="Q4JVP1"/>
<dbReference type="STRING" id="306537.jk0952"/>
<dbReference type="GeneID" id="92738465"/>
<dbReference type="KEGG" id="cjk:jk0952"/>
<dbReference type="eggNOG" id="COG0040">
    <property type="taxonomic scope" value="Bacteria"/>
</dbReference>
<dbReference type="HOGENOM" id="CLU_038115_1_1_11"/>
<dbReference type="OrthoDB" id="9801867at2"/>
<dbReference type="UniPathway" id="UPA00031">
    <property type="reaction ID" value="UER00006"/>
</dbReference>
<dbReference type="Proteomes" id="UP000000545">
    <property type="component" value="Chromosome"/>
</dbReference>
<dbReference type="GO" id="GO:0005737">
    <property type="term" value="C:cytoplasm"/>
    <property type="evidence" value="ECO:0007669"/>
    <property type="project" value="UniProtKB-SubCell"/>
</dbReference>
<dbReference type="GO" id="GO:0005524">
    <property type="term" value="F:ATP binding"/>
    <property type="evidence" value="ECO:0007669"/>
    <property type="project" value="UniProtKB-KW"/>
</dbReference>
<dbReference type="GO" id="GO:0003879">
    <property type="term" value="F:ATP phosphoribosyltransferase activity"/>
    <property type="evidence" value="ECO:0007669"/>
    <property type="project" value="UniProtKB-UniRule"/>
</dbReference>
<dbReference type="GO" id="GO:0000287">
    <property type="term" value="F:magnesium ion binding"/>
    <property type="evidence" value="ECO:0007669"/>
    <property type="project" value="UniProtKB-UniRule"/>
</dbReference>
<dbReference type="GO" id="GO:0000105">
    <property type="term" value="P:L-histidine biosynthetic process"/>
    <property type="evidence" value="ECO:0007669"/>
    <property type="project" value="UniProtKB-UniRule"/>
</dbReference>
<dbReference type="CDD" id="cd13591">
    <property type="entry name" value="PBP2_HisGL1"/>
    <property type="match status" value="1"/>
</dbReference>
<dbReference type="FunFam" id="3.30.70.120:FF:000003">
    <property type="entry name" value="ATP phosphoribosyltransferase"/>
    <property type="match status" value="1"/>
</dbReference>
<dbReference type="Gene3D" id="3.30.70.120">
    <property type="match status" value="1"/>
</dbReference>
<dbReference type="Gene3D" id="3.40.190.10">
    <property type="entry name" value="Periplasmic binding protein-like II"/>
    <property type="match status" value="2"/>
</dbReference>
<dbReference type="HAMAP" id="MF_00079">
    <property type="entry name" value="HisG_Long"/>
    <property type="match status" value="1"/>
</dbReference>
<dbReference type="InterPro" id="IPR020621">
    <property type="entry name" value="ATP-PRT_HisG_long"/>
</dbReference>
<dbReference type="InterPro" id="IPR013820">
    <property type="entry name" value="ATP_PRibTrfase_cat"/>
</dbReference>
<dbReference type="InterPro" id="IPR018198">
    <property type="entry name" value="ATP_PRibTrfase_CS"/>
</dbReference>
<dbReference type="InterPro" id="IPR001348">
    <property type="entry name" value="ATP_PRibTrfase_HisG"/>
</dbReference>
<dbReference type="InterPro" id="IPR013115">
    <property type="entry name" value="HisG_C"/>
</dbReference>
<dbReference type="InterPro" id="IPR011322">
    <property type="entry name" value="N-reg_PII-like_a/b"/>
</dbReference>
<dbReference type="InterPro" id="IPR015867">
    <property type="entry name" value="N-reg_PII/ATP_PRibTrfase_C"/>
</dbReference>
<dbReference type="NCBIfam" id="TIGR00070">
    <property type="entry name" value="hisG"/>
    <property type="match status" value="1"/>
</dbReference>
<dbReference type="NCBIfam" id="TIGR03455">
    <property type="entry name" value="HisG_C-term"/>
    <property type="match status" value="1"/>
</dbReference>
<dbReference type="PANTHER" id="PTHR21403:SF8">
    <property type="entry name" value="ATP PHOSPHORIBOSYLTRANSFERASE"/>
    <property type="match status" value="1"/>
</dbReference>
<dbReference type="PANTHER" id="PTHR21403">
    <property type="entry name" value="ATP PHOSPHORIBOSYLTRANSFERASE ATP-PRTASE"/>
    <property type="match status" value="1"/>
</dbReference>
<dbReference type="Pfam" id="PF01634">
    <property type="entry name" value="HisG"/>
    <property type="match status" value="1"/>
</dbReference>
<dbReference type="Pfam" id="PF08029">
    <property type="entry name" value="HisG_C"/>
    <property type="match status" value="1"/>
</dbReference>
<dbReference type="SUPFAM" id="SSF54913">
    <property type="entry name" value="GlnB-like"/>
    <property type="match status" value="1"/>
</dbReference>
<dbReference type="SUPFAM" id="SSF53850">
    <property type="entry name" value="Periplasmic binding protein-like II"/>
    <property type="match status" value="1"/>
</dbReference>
<dbReference type="PROSITE" id="PS01316">
    <property type="entry name" value="ATP_P_PHORIBOSYLTR"/>
    <property type="match status" value="1"/>
</dbReference>
<comment type="function">
    <text evidence="1">Catalyzes the condensation of ATP and 5-phosphoribose 1-diphosphate to form N'-(5'-phosphoribosyl)-ATP (PR-ATP). Has a crucial role in the pathway because the rate of histidine biosynthesis seems to be controlled primarily by regulation of HisG enzymatic activity.</text>
</comment>
<comment type="catalytic activity">
    <reaction evidence="1">
        <text>1-(5-phospho-beta-D-ribosyl)-ATP + diphosphate = 5-phospho-alpha-D-ribose 1-diphosphate + ATP</text>
        <dbReference type="Rhea" id="RHEA:18473"/>
        <dbReference type="ChEBI" id="CHEBI:30616"/>
        <dbReference type="ChEBI" id="CHEBI:33019"/>
        <dbReference type="ChEBI" id="CHEBI:58017"/>
        <dbReference type="ChEBI" id="CHEBI:73183"/>
        <dbReference type="EC" id="2.4.2.17"/>
    </reaction>
</comment>
<comment type="cofactor">
    <cofactor evidence="1">
        <name>Mg(2+)</name>
        <dbReference type="ChEBI" id="CHEBI:18420"/>
    </cofactor>
</comment>
<comment type="activity regulation">
    <text evidence="1">Feedback inhibited by histidine.</text>
</comment>
<comment type="pathway">
    <text evidence="1">Amino-acid biosynthesis; L-histidine biosynthesis; L-histidine from 5-phospho-alpha-D-ribose 1-diphosphate: step 1/9.</text>
</comment>
<comment type="subcellular location">
    <subcellularLocation>
        <location evidence="1">Cytoplasm</location>
    </subcellularLocation>
</comment>
<comment type="similarity">
    <text evidence="1">Belongs to the ATP phosphoribosyltransferase family. Long subfamily.</text>
</comment>